<dbReference type="EMBL" id="CP000016">
    <property type="protein sequence ID" value="AAZ41150.1"/>
    <property type="molecule type" value="Genomic_DNA"/>
</dbReference>
<dbReference type="RefSeq" id="WP_011283061.1">
    <property type="nucleotide sequence ID" value="NC_007292.1"/>
</dbReference>
<dbReference type="SMR" id="Q492F1"/>
<dbReference type="STRING" id="291272.BPEN_540"/>
<dbReference type="KEGG" id="bpn:BPEN_540"/>
<dbReference type="eggNOG" id="COG0378">
    <property type="taxonomic scope" value="Bacteria"/>
</dbReference>
<dbReference type="HOGENOM" id="CLU_072144_1_0_6"/>
<dbReference type="OrthoDB" id="9802035at2"/>
<dbReference type="Proteomes" id="UP000007794">
    <property type="component" value="Chromosome"/>
</dbReference>
<dbReference type="GO" id="GO:0005737">
    <property type="term" value="C:cytoplasm"/>
    <property type="evidence" value="ECO:0007669"/>
    <property type="project" value="UniProtKB-SubCell"/>
</dbReference>
<dbReference type="GO" id="GO:0005525">
    <property type="term" value="F:GTP binding"/>
    <property type="evidence" value="ECO:0007669"/>
    <property type="project" value="UniProtKB-KW"/>
</dbReference>
<dbReference type="GO" id="GO:0003924">
    <property type="term" value="F:GTPase activity"/>
    <property type="evidence" value="ECO:0007669"/>
    <property type="project" value="InterPro"/>
</dbReference>
<dbReference type="GO" id="GO:0016151">
    <property type="term" value="F:nickel cation binding"/>
    <property type="evidence" value="ECO:0007669"/>
    <property type="project" value="UniProtKB-UniRule"/>
</dbReference>
<dbReference type="GO" id="GO:0043419">
    <property type="term" value="P:urea catabolic process"/>
    <property type="evidence" value="ECO:0007669"/>
    <property type="project" value="InterPro"/>
</dbReference>
<dbReference type="CDD" id="cd05540">
    <property type="entry name" value="UreG"/>
    <property type="match status" value="1"/>
</dbReference>
<dbReference type="FunFam" id="3.40.50.300:FF:000208">
    <property type="entry name" value="Urease accessory protein UreG"/>
    <property type="match status" value="1"/>
</dbReference>
<dbReference type="Gene3D" id="3.40.50.300">
    <property type="entry name" value="P-loop containing nucleotide triphosphate hydrolases"/>
    <property type="match status" value="1"/>
</dbReference>
<dbReference type="HAMAP" id="MF_01389">
    <property type="entry name" value="UreG"/>
    <property type="match status" value="1"/>
</dbReference>
<dbReference type="InterPro" id="IPR003495">
    <property type="entry name" value="CobW/HypB/UreG_nucleotide-bd"/>
</dbReference>
<dbReference type="InterPro" id="IPR027417">
    <property type="entry name" value="P-loop_NTPase"/>
</dbReference>
<dbReference type="InterPro" id="IPR004400">
    <property type="entry name" value="UreG"/>
</dbReference>
<dbReference type="NCBIfam" id="TIGR00101">
    <property type="entry name" value="ureG"/>
    <property type="match status" value="1"/>
</dbReference>
<dbReference type="PANTHER" id="PTHR31715">
    <property type="entry name" value="UREASE ACCESSORY PROTEIN G"/>
    <property type="match status" value="1"/>
</dbReference>
<dbReference type="PANTHER" id="PTHR31715:SF0">
    <property type="entry name" value="UREASE ACCESSORY PROTEIN G"/>
    <property type="match status" value="1"/>
</dbReference>
<dbReference type="Pfam" id="PF02492">
    <property type="entry name" value="cobW"/>
    <property type="match status" value="1"/>
</dbReference>
<dbReference type="PIRSF" id="PIRSF005624">
    <property type="entry name" value="Ni-bind_GTPase"/>
    <property type="match status" value="1"/>
</dbReference>
<dbReference type="SUPFAM" id="SSF52540">
    <property type="entry name" value="P-loop containing nucleoside triphosphate hydrolases"/>
    <property type="match status" value="1"/>
</dbReference>
<keyword id="KW-0143">Chaperone</keyword>
<keyword id="KW-0963">Cytoplasm</keyword>
<keyword id="KW-0342">GTP-binding</keyword>
<keyword id="KW-0996">Nickel insertion</keyword>
<keyword id="KW-0547">Nucleotide-binding</keyword>
<keyword id="KW-1185">Reference proteome</keyword>
<gene>
    <name evidence="1" type="primary">ureG</name>
    <name type="ordered locus">BPEN_540</name>
</gene>
<evidence type="ECO:0000255" key="1">
    <source>
        <dbReference type="HAMAP-Rule" id="MF_01389"/>
    </source>
</evidence>
<feature type="chain" id="PRO_0000347349" description="Urease accessory protein UreG">
    <location>
        <begin position="1"/>
        <end position="207"/>
    </location>
</feature>
<feature type="binding site" evidence="1">
    <location>
        <begin position="16"/>
        <end position="23"/>
    </location>
    <ligand>
        <name>GTP</name>
        <dbReference type="ChEBI" id="CHEBI:37565"/>
    </ligand>
</feature>
<protein>
    <recommendedName>
        <fullName evidence="1">Urease accessory protein UreG</fullName>
    </recommendedName>
</protein>
<organism>
    <name type="scientific">Blochmanniella pennsylvanica (strain BPEN)</name>
    <dbReference type="NCBI Taxonomy" id="291272"/>
    <lineage>
        <taxon>Bacteria</taxon>
        <taxon>Pseudomonadati</taxon>
        <taxon>Pseudomonadota</taxon>
        <taxon>Gammaproteobacteria</taxon>
        <taxon>Enterobacterales</taxon>
        <taxon>Enterobacteriaceae</taxon>
        <taxon>ant endosymbionts</taxon>
        <taxon>Candidatus Blochmanniella</taxon>
    </lineage>
</organism>
<comment type="function">
    <text evidence="1">Facilitates the functional incorporation of the urease nickel metallocenter. This process requires GTP hydrolysis, probably effectuated by UreG.</text>
</comment>
<comment type="subunit">
    <text evidence="1">Homodimer. UreD, UreF and UreG form a complex that acts as a GTP-hydrolysis-dependent molecular chaperone, activating the urease apoprotein by helping to assemble the nickel containing metallocenter of UreC. The UreE protein probably delivers the nickel.</text>
</comment>
<comment type="subcellular location">
    <subcellularLocation>
        <location evidence="1">Cytoplasm</location>
    </subcellularLocation>
</comment>
<comment type="similarity">
    <text evidence="1">Belongs to the SIMIBI class G3E GTPase family. UreG subfamily.</text>
</comment>
<sequence>MLLNQYRKPLRIGVGGPVGSGKTALLEVLCKRMKDSYQLAVVTNDIYTKEDQRILIDANALSADRIVGVETGGCPHTAIREDASMNLLAVEELISKFNNLDIIFIESGGDNLSATFSPELSDLNLYVIDVAAGDKIPRKGGPGITRSDFLIINKIDLAEYVGASLEIMNRDTNLMRKGLPWSFTNLKTGHGVQSVVDFILRQRLYLQ</sequence>
<name>UREG_BLOPB</name>
<accession>Q492F1</accession>
<proteinExistence type="inferred from homology"/>
<reference key="1">
    <citation type="journal article" date="2005" name="Genome Res.">
        <title>Genome sequence of Blochmannia pennsylvanicus indicates parallel evolutionary trends among bacterial mutualists of insects.</title>
        <authorList>
            <person name="Degnan P.H."/>
            <person name="Lazarus A.B."/>
            <person name="Wernegreen J.J."/>
        </authorList>
    </citation>
    <scope>NUCLEOTIDE SEQUENCE [LARGE SCALE GENOMIC DNA]</scope>
    <source>
        <strain>BPEN</strain>
    </source>
</reference>